<protein>
    <recommendedName>
        <fullName>Protein maestro</fullName>
    </recommendedName>
    <alternativeName>
        <fullName>Male-specific transcription in the developing reproductive organs</fullName>
    </alternativeName>
</protein>
<dbReference type="EMBL" id="AY243876">
    <property type="protein sequence ID" value="AAO60057.1"/>
    <property type="molecule type" value="mRNA"/>
</dbReference>
<dbReference type="EMBL" id="AK017067">
    <property type="protein sequence ID" value="BAB30579.2"/>
    <property type="molecule type" value="mRNA"/>
</dbReference>
<dbReference type="RefSeq" id="NP_001292811.1">
    <property type="nucleotide sequence ID" value="NM_001305882.1"/>
</dbReference>
<dbReference type="RefSeq" id="NP_082017.2">
    <property type="nucleotide sequence ID" value="NM_027741.3"/>
</dbReference>
<dbReference type="SMR" id="Q7TNB4"/>
<dbReference type="FunCoup" id="Q7TNB4">
    <property type="interactions" value="865"/>
</dbReference>
<dbReference type="STRING" id="10090.ENSMUSP00000136775"/>
<dbReference type="GlyGen" id="Q7TNB4">
    <property type="glycosylation" value="1 site"/>
</dbReference>
<dbReference type="iPTMnet" id="Q7TNB4"/>
<dbReference type="PhosphoSitePlus" id="Q7TNB4"/>
<dbReference type="PaxDb" id="10090-ENSMUSP00000113392"/>
<dbReference type="DNASU" id="71263"/>
<dbReference type="GeneID" id="71263"/>
<dbReference type="KEGG" id="mmu:71263"/>
<dbReference type="AGR" id="MGI:2152817"/>
<dbReference type="CTD" id="83876"/>
<dbReference type="MGI" id="MGI:2152817">
    <property type="gene designation" value="Mro"/>
</dbReference>
<dbReference type="eggNOG" id="KOG2032">
    <property type="taxonomic scope" value="Eukaryota"/>
</dbReference>
<dbReference type="InParanoid" id="Q7TNB4"/>
<dbReference type="OrthoDB" id="1884734at2759"/>
<dbReference type="BioGRID-ORCS" id="71263">
    <property type="hits" value="0 hits in 59 CRISPR screens"/>
</dbReference>
<dbReference type="PRO" id="PR:Q7TNB4"/>
<dbReference type="Proteomes" id="UP000000589">
    <property type="component" value="Unplaced"/>
</dbReference>
<dbReference type="RNAct" id="Q7TNB4">
    <property type="molecule type" value="protein"/>
</dbReference>
<dbReference type="GO" id="GO:0005730">
    <property type="term" value="C:nucleolus"/>
    <property type="evidence" value="ECO:0000314"/>
    <property type="project" value="MGI"/>
</dbReference>
<dbReference type="GO" id="GO:0005634">
    <property type="term" value="C:nucleus"/>
    <property type="evidence" value="ECO:0000314"/>
    <property type="project" value="MGI"/>
</dbReference>
<dbReference type="FunFam" id="1.25.10.10:FF:001357">
    <property type="entry name" value="Protein maestro"/>
    <property type="match status" value="1"/>
</dbReference>
<dbReference type="Gene3D" id="1.25.10.10">
    <property type="entry name" value="Leucine-rich Repeat Variant"/>
    <property type="match status" value="1"/>
</dbReference>
<dbReference type="InterPro" id="IPR011989">
    <property type="entry name" value="ARM-like"/>
</dbReference>
<dbReference type="InterPro" id="IPR016024">
    <property type="entry name" value="ARM-type_fold"/>
</dbReference>
<dbReference type="InterPro" id="IPR055406">
    <property type="entry name" value="HEAT_Maestro"/>
</dbReference>
<dbReference type="InterPro" id="IPR045206">
    <property type="entry name" value="Maestro_heat-like_prot"/>
</dbReference>
<dbReference type="PANTHER" id="PTHR23120:SF39">
    <property type="entry name" value="MAESTRO"/>
    <property type="match status" value="1"/>
</dbReference>
<dbReference type="PANTHER" id="PTHR23120">
    <property type="entry name" value="MAESTRO-RELATED HEAT DOMAIN-CONTAINING"/>
    <property type="match status" value="1"/>
</dbReference>
<dbReference type="Pfam" id="PF23227">
    <property type="entry name" value="HEAT_MROH2B_C"/>
    <property type="match status" value="1"/>
</dbReference>
<dbReference type="SUPFAM" id="SSF48371">
    <property type="entry name" value="ARM repeat"/>
    <property type="match status" value="1"/>
</dbReference>
<feature type="chain" id="PRO_0000248199" description="Protein maestro">
    <location>
        <begin position="1"/>
        <end position="248"/>
    </location>
</feature>
<feature type="repeat" description="HEAT">
    <location>
        <begin position="128"/>
        <end position="163"/>
    </location>
</feature>
<feature type="region of interest" description="Disordered" evidence="1">
    <location>
        <begin position="1"/>
        <end position="23"/>
    </location>
</feature>
<feature type="sequence conflict" description="In Ref. 2; BAB30579." evidence="3" ref="2">
    <location>
        <position position="82"/>
    </location>
</feature>
<feature type="sequence conflict" description="In Ref. 2; BAB30579." evidence="3" ref="2">
    <original>E</original>
    <variation>D</variation>
    <location>
        <position position="221"/>
    </location>
</feature>
<sequence>MEQTRKIPNQPLPTPTSQSKKRRTPLLSFLSKVSWKLRLQKRELLKNALFVLAERARDPNAKKRHLAMRGLGALAREAPDKQVRKYKKVMLDLLVRGLYDPVSSEVIHESVKTLTIMLGKIQGHGLGSFFIDITLQARTLLDDEDDSVRYSAFVLFGQLASFAGWRWKKFFTQQVNQTQDSLLGHLQDESPKVAKACKMTVRACVPYLKPRKVPSFQSEEEQKNHRLSRQLSHCHPEILLFFYANKIL</sequence>
<proteinExistence type="evidence at transcript level"/>
<organism>
    <name type="scientific">Mus musculus</name>
    <name type="common">Mouse</name>
    <dbReference type="NCBI Taxonomy" id="10090"/>
    <lineage>
        <taxon>Eukaryota</taxon>
        <taxon>Metazoa</taxon>
        <taxon>Chordata</taxon>
        <taxon>Craniata</taxon>
        <taxon>Vertebrata</taxon>
        <taxon>Euteleostomi</taxon>
        <taxon>Mammalia</taxon>
        <taxon>Eutheria</taxon>
        <taxon>Euarchontoglires</taxon>
        <taxon>Glires</taxon>
        <taxon>Rodentia</taxon>
        <taxon>Myomorpha</taxon>
        <taxon>Muroidea</taxon>
        <taxon>Muridae</taxon>
        <taxon>Murinae</taxon>
        <taxon>Mus</taxon>
        <taxon>Mus</taxon>
    </lineage>
</organism>
<reference key="1">
    <citation type="journal article" date="2003" name="Dev. Dyn.">
        <title>Candidate testis-determining gene, Maestro (Mro), encodes a novel HEAT repeat protein.</title>
        <authorList>
            <person name="Smith L."/>
            <person name="Van Hateren N."/>
            <person name="Willan J."/>
            <person name="Romero R."/>
            <person name="Blanco G."/>
            <person name="Siggers P."/>
            <person name="Walsh J."/>
            <person name="Banerjee R."/>
            <person name="Denney P."/>
            <person name="Ponting C."/>
            <person name="Greenfield A."/>
        </authorList>
    </citation>
    <scope>NUCLEOTIDE SEQUENCE [MRNA]</scope>
    <scope>SUBCELLULAR LOCATION</scope>
    <scope>TISSUE SPECIFICITY</scope>
    <scope>DEVELOPMENTAL STAGE</scope>
    <source>
        <strain>129/Sv</strain>
    </source>
</reference>
<reference key="2">
    <citation type="journal article" date="2005" name="Science">
        <title>The transcriptional landscape of the mammalian genome.</title>
        <authorList>
            <person name="Carninci P."/>
            <person name="Kasukawa T."/>
            <person name="Katayama S."/>
            <person name="Gough J."/>
            <person name="Frith M.C."/>
            <person name="Maeda N."/>
            <person name="Oyama R."/>
            <person name="Ravasi T."/>
            <person name="Lenhard B."/>
            <person name="Wells C."/>
            <person name="Kodzius R."/>
            <person name="Shimokawa K."/>
            <person name="Bajic V.B."/>
            <person name="Brenner S.E."/>
            <person name="Batalov S."/>
            <person name="Forrest A.R."/>
            <person name="Zavolan M."/>
            <person name="Davis M.J."/>
            <person name="Wilming L.G."/>
            <person name="Aidinis V."/>
            <person name="Allen J.E."/>
            <person name="Ambesi-Impiombato A."/>
            <person name="Apweiler R."/>
            <person name="Aturaliya R.N."/>
            <person name="Bailey T.L."/>
            <person name="Bansal M."/>
            <person name="Baxter L."/>
            <person name="Beisel K.W."/>
            <person name="Bersano T."/>
            <person name="Bono H."/>
            <person name="Chalk A.M."/>
            <person name="Chiu K.P."/>
            <person name="Choudhary V."/>
            <person name="Christoffels A."/>
            <person name="Clutterbuck D.R."/>
            <person name="Crowe M.L."/>
            <person name="Dalla E."/>
            <person name="Dalrymple B.P."/>
            <person name="de Bono B."/>
            <person name="Della Gatta G."/>
            <person name="di Bernardo D."/>
            <person name="Down T."/>
            <person name="Engstrom P."/>
            <person name="Fagiolini M."/>
            <person name="Faulkner G."/>
            <person name="Fletcher C.F."/>
            <person name="Fukushima T."/>
            <person name="Furuno M."/>
            <person name="Futaki S."/>
            <person name="Gariboldi M."/>
            <person name="Georgii-Hemming P."/>
            <person name="Gingeras T.R."/>
            <person name="Gojobori T."/>
            <person name="Green R.E."/>
            <person name="Gustincich S."/>
            <person name="Harbers M."/>
            <person name="Hayashi Y."/>
            <person name="Hensch T.K."/>
            <person name="Hirokawa N."/>
            <person name="Hill D."/>
            <person name="Huminiecki L."/>
            <person name="Iacono M."/>
            <person name="Ikeo K."/>
            <person name="Iwama A."/>
            <person name="Ishikawa T."/>
            <person name="Jakt M."/>
            <person name="Kanapin A."/>
            <person name="Katoh M."/>
            <person name="Kawasawa Y."/>
            <person name="Kelso J."/>
            <person name="Kitamura H."/>
            <person name="Kitano H."/>
            <person name="Kollias G."/>
            <person name="Krishnan S.P."/>
            <person name="Kruger A."/>
            <person name="Kummerfeld S.K."/>
            <person name="Kurochkin I.V."/>
            <person name="Lareau L.F."/>
            <person name="Lazarevic D."/>
            <person name="Lipovich L."/>
            <person name="Liu J."/>
            <person name="Liuni S."/>
            <person name="McWilliam S."/>
            <person name="Madan Babu M."/>
            <person name="Madera M."/>
            <person name="Marchionni L."/>
            <person name="Matsuda H."/>
            <person name="Matsuzawa S."/>
            <person name="Miki H."/>
            <person name="Mignone F."/>
            <person name="Miyake S."/>
            <person name="Morris K."/>
            <person name="Mottagui-Tabar S."/>
            <person name="Mulder N."/>
            <person name="Nakano N."/>
            <person name="Nakauchi H."/>
            <person name="Ng P."/>
            <person name="Nilsson R."/>
            <person name="Nishiguchi S."/>
            <person name="Nishikawa S."/>
            <person name="Nori F."/>
            <person name="Ohara O."/>
            <person name="Okazaki Y."/>
            <person name="Orlando V."/>
            <person name="Pang K.C."/>
            <person name="Pavan W.J."/>
            <person name="Pavesi G."/>
            <person name="Pesole G."/>
            <person name="Petrovsky N."/>
            <person name="Piazza S."/>
            <person name="Reed J."/>
            <person name="Reid J.F."/>
            <person name="Ring B.Z."/>
            <person name="Ringwald M."/>
            <person name="Rost B."/>
            <person name="Ruan Y."/>
            <person name="Salzberg S.L."/>
            <person name="Sandelin A."/>
            <person name="Schneider C."/>
            <person name="Schoenbach C."/>
            <person name="Sekiguchi K."/>
            <person name="Semple C.A."/>
            <person name="Seno S."/>
            <person name="Sessa L."/>
            <person name="Sheng Y."/>
            <person name="Shibata Y."/>
            <person name="Shimada H."/>
            <person name="Shimada K."/>
            <person name="Silva D."/>
            <person name="Sinclair B."/>
            <person name="Sperling S."/>
            <person name="Stupka E."/>
            <person name="Sugiura K."/>
            <person name="Sultana R."/>
            <person name="Takenaka Y."/>
            <person name="Taki K."/>
            <person name="Tammoja K."/>
            <person name="Tan S.L."/>
            <person name="Tang S."/>
            <person name="Taylor M.S."/>
            <person name="Tegner J."/>
            <person name="Teichmann S.A."/>
            <person name="Ueda H.R."/>
            <person name="van Nimwegen E."/>
            <person name="Verardo R."/>
            <person name="Wei C.L."/>
            <person name="Yagi K."/>
            <person name="Yamanishi H."/>
            <person name="Zabarovsky E."/>
            <person name="Zhu S."/>
            <person name="Zimmer A."/>
            <person name="Hide W."/>
            <person name="Bult C."/>
            <person name="Grimmond S.M."/>
            <person name="Teasdale R.D."/>
            <person name="Liu E.T."/>
            <person name="Brusic V."/>
            <person name="Quackenbush J."/>
            <person name="Wahlestedt C."/>
            <person name="Mattick J.S."/>
            <person name="Hume D.A."/>
            <person name="Kai C."/>
            <person name="Sasaki D."/>
            <person name="Tomaru Y."/>
            <person name="Fukuda S."/>
            <person name="Kanamori-Katayama M."/>
            <person name="Suzuki M."/>
            <person name="Aoki J."/>
            <person name="Arakawa T."/>
            <person name="Iida J."/>
            <person name="Imamura K."/>
            <person name="Itoh M."/>
            <person name="Kato T."/>
            <person name="Kawaji H."/>
            <person name="Kawagashira N."/>
            <person name="Kawashima T."/>
            <person name="Kojima M."/>
            <person name="Kondo S."/>
            <person name="Konno H."/>
            <person name="Nakano K."/>
            <person name="Ninomiya N."/>
            <person name="Nishio T."/>
            <person name="Okada M."/>
            <person name="Plessy C."/>
            <person name="Shibata K."/>
            <person name="Shiraki T."/>
            <person name="Suzuki S."/>
            <person name="Tagami M."/>
            <person name="Waki K."/>
            <person name="Watahiki A."/>
            <person name="Okamura-Oho Y."/>
            <person name="Suzuki H."/>
            <person name="Kawai J."/>
            <person name="Hayashizaki Y."/>
        </authorList>
    </citation>
    <scope>NUCLEOTIDE SEQUENCE [LARGE SCALE MRNA] OF 27-248</scope>
    <source>
        <strain>C57BL/6J</strain>
        <tissue>Testis</tissue>
    </source>
</reference>
<gene>
    <name type="primary">Mro</name>
</gene>
<accession>Q7TNB4</accession>
<accession>Q9D3T8</accession>
<name>MSTRO_MOUSE</name>
<keyword id="KW-0539">Nucleus</keyword>
<keyword id="KW-1185">Reference proteome</keyword>
<evidence type="ECO:0000256" key="1">
    <source>
        <dbReference type="SAM" id="MobiDB-lite"/>
    </source>
</evidence>
<evidence type="ECO:0000269" key="2">
    <source>
    </source>
</evidence>
<evidence type="ECO:0000305" key="3"/>
<comment type="subcellular location">
    <subcellularLocation>
        <location evidence="2">Nucleus</location>
        <location evidence="2">Nucleolus</location>
    </subcellularLocation>
</comment>
<comment type="tissue specificity">
    <text evidence="2">Prominent expression seen in testis, brain, liver and heart. Weakly expressed in the kidney.</text>
</comment>
<comment type="developmental stage">
    <text evidence="2">First detected in the developing male gonad before overt testis differentiation. By 12.5 dpc, expression is restricted to the developing testis cords and its expression is not germ cell-dependent. No expression seen in female gonads between 10.5 and 14.5 dpc.</text>
</comment>